<sequence length="639" mass="70244">MDNEKQASPPPAAPPLNWRYLLWIILLGIFLISWLGNAGRQAGDEITYTEFKQALHQGKIAKVTLEGQHISGTYHEAGGNIQPEGKDSKGFSTTRPPFDDPELMKLLEQKGVVVQAKSEEPSLWMQAIIGILPWFLILGLIFYVSYRMQQRMMGGGRGGPFGFGKAPVKRFREGSIGVTFEDVAGVENAKRDLREIVDYLKEPGQFKAVGAKIPKGILLVGRPGTGKTLLARAVAGEAGVPFYSISGSDFIEMFVGVGAARVRDMFKAAKEEAPSILFIDEIDSVGRARGTGLGGGHDEREQTLNQILGEMDGFAAHENVVVLAATNRPDVLDPALLRPGRFDRKVVLDLPDKKARQRVLEVHTKNVPLAADVDLERVARRTVGFSGADLANLVNEAALLTGRERKKEVDMDMFNLARDKIVLGAKRETILGEEEKKLVAYHESGHALTAWLLPEADPLHQVSIIPRGMALGVTEQAPEEERHSLSRAYLLDRLGVMLGGRISEKITFGDVTSGAESDLKQATQLARRMVCQWGMSDKIGAAAFSRSEEHVFLGRELSQPRDFSEQTAQIIDDEIRRILSEVERKTENLLQENRAKLDALAKALIEAETLNLVEVEKIFKNVKELPQEGHNEAVATGAG</sequence>
<gene>
    <name evidence="1" type="primary">ftsH</name>
    <name type="ordered locus">Noc_0272</name>
</gene>
<evidence type="ECO:0000255" key="1">
    <source>
        <dbReference type="HAMAP-Rule" id="MF_01458"/>
    </source>
</evidence>
<accession>Q3JEE4</accession>
<keyword id="KW-0067">ATP-binding</keyword>
<keyword id="KW-0997">Cell inner membrane</keyword>
<keyword id="KW-1003">Cell membrane</keyword>
<keyword id="KW-0378">Hydrolase</keyword>
<keyword id="KW-0472">Membrane</keyword>
<keyword id="KW-0479">Metal-binding</keyword>
<keyword id="KW-0482">Metalloprotease</keyword>
<keyword id="KW-0547">Nucleotide-binding</keyword>
<keyword id="KW-0645">Protease</keyword>
<keyword id="KW-1185">Reference proteome</keyword>
<keyword id="KW-0812">Transmembrane</keyword>
<keyword id="KW-1133">Transmembrane helix</keyword>
<keyword id="KW-0862">Zinc</keyword>
<reference key="1">
    <citation type="journal article" date="2006" name="Appl. Environ. Microbiol.">
        <title>Complete genome sequence of the marine, chemolithoautotrophic, ammonia-oxidizing bacterium Nitrosococcus oceani ATCC 19707.</title>
        <authorList>
            <person name="Klotz M.G."/>
            <person name="Arp D.J."/>
            <person name="Chain P.S.G."/>
            <person name="El-Sheikh A.F."/>
            <person name="Hauser L.J."/>
            <person name="Hommes N.G."/>
            <person name="Larimer F.W."/>
            <person name="Malfatti S.A."/>
            <person name="Norton J.M."/>
            <person name="Poret-Peterson A.T."/>
            <person name="Vergez L.M."/>
            <person name="Ward B.B."/>
        </authorList>
    </citation>
    <scope>NUCLEOTIDE SEQUENCE [LARGE SCALE GENOMIC DNA]</scope>
    <source>
        <strain>ATCC 19707 / BCRC 17464 / JCM 30415 / NCIMB 11848 / C-107</strain>
    </source>
</reference>
<proteinExistence type="inferred from homology"/>
<organism>
    <name type="scientific">Nitrosococcus oceani (strain ATCC 19707 / BCRC 17464 / JCM 30415 / NCIMB 11848 / C-107)</name>
    <dbReference type="NCBI Taxonomy" id="323261"/>
    <lineage>
        <taxon>Bacteria</taxon>
        <taxon>Pseudomonadati</taxon>
        <taxon>Pseudomonadota</taxon>
        <taxon>Gammaproteobacteria</taxon>
        <taxon>Chromatiales</taxon>
        <taxon>Chromatiaceae</taxon>
        <taxon>Nitrosococcus</taxon>
    </lineage>
</organism>
<comment type="function">
    <text evidence="1">Acts as a processive, ATP-dependent zinc metallopeptidase for both cytoplasmic and membrane proteins. Plays a role in the quality control of integral membrane proteins.</text>
</comment>
<comment type="cofactor">
    <cofactor evidence="1">
        <name>Zn(2+)</name>
        <dbReference type="ChEBI" id="CHEBI:29105"/>
    </cofactor>
    <text evidence="1">Binds 1 zinc ion per subunit.</text>
</comment>
<comment type="subunit">
    <text evidence="1">Homohexamer.</text>
</comment>
<comment type="subcellular location">
    <subcellularLocation>
        <location evidence="1">Cell inner membrane</location>
        <topology evidence="1">Multi-pass membrane protein</topology>
        <orientation evidence="1">Cytoplasmic side</orientation>
    </subcellularLocation>
</comment>
<comment type="similarity">
    <text evidence="1">In the central section; belongs to the AAA ATPase family.</text>
</comment>
<comment type="similarity">
    <text evidence="1">In the C-terminal section; belongs to the peptidase M41 family.</text>
</comment>
<protein>
    <recommendedName>
        <fullName evidence="1">ATP-dependent zinc metalloprotease FtsH</fullName>
        <ecNumber evidence="1">3.4.24.-</ecNumber>
    </recommendedName>
</protein>
<dbReference type="EC" id="3.4.24.-" evidence="1"/>
<dbReference type="EMBL" id="CP000127">
    <property type="protein sequence ID" value="ABA56802.1"/>
    <property type="molecule type" value="Genomic_DNA"/>
</dbReference>
<dbReference type="RefSeq" id="WP_002814302.1">
    <property type="nucleotide sequence ID" value="NC_007484.1"/>
</dbReference>
<dbReference type="SMR" id="Q3JEE4"/>
<dbReference type="STRING" id="323261.Noc_0272"/>
<dbReference type="KEGG" id="noc:Noc_0272"/>
<dbReference type="eggNOG" id="COG0465">
    <property type="taxonomic scope" value="Bacteria"/>
</dbReference>
<dbReference type="HOGENOM" id="CLU_000688_16_2_6"/>
<dbReference type="InParanoid" id="Q3JEE4"/>
<dbReference type="Proteomes" id="UP000006838">
    <property type="component" value="Chromosome"/>
</dbReference>
<dbReference type="GO" id="GO:0005886">
    <property type="term" value="C:plasma membrane"/>
    <property type="evidence" value="ECO:0007669"/>
    <property type="project" value="UniProtKB-SubCell"/>
</dbReference>
<dbReference type="GO" id="GO:0005524">
    <property type="term" value="F:ATP binding"/>
    <property type="evidence" value="ECO:0007669"/>
    <property type="project" value="UniProtKB-UniRule"/>
</dbReference>
<dbReference type="GO" id="GO:0016887">
    <property type="term" value="F:ATP hydrolysis activity"/>
    <property type="evidence" value="ECO:0007669"/>
    <property type="project" value="UniProtKB-UniRule"/>
</dbReference>
<dbReference type="GO" id="GO:0004176">
    <property type="term" value="F:ATP-dependent peptidase activity"/>
    <property type="evidence" value="ECO:0007669"/>
    <property type="project" value="InterPro"/>
</dbReference>
<dbReference type="GO" id="GO:0004222">
    <property type="term" value="F:metalloendopeptidase activity"/>
    <property type="evidence" value="ECO:0007669"/>
    <property type="project" value="InterPro"/>
</dbReference>
<dbReference type="GO" id="GO:0008270">
    <property type="term" value="F:zinc ion binding"/>
    <property type="evidence" value="ECO:0007669"/>
    <property type="project" value="UniProtKB-UniRule"/>
</dbReference>
<dbReference type="GO" id="GO:0030163">
    <property type="term" value="P:protein catabolic process"/>
    <property type="evidence" value="ECO:0007669"/>
    <property type="project" value="UniProtKB-UniRule"/>
</dbReference>
<dbReference type="GO" id="GO:0006508">
    <property type="term" value="P:proteolysis"/>
    <property type="evidence" value="ECO:0007669"/>
    <property type="project" value="UniProtKB-KW"/>
</dbReference>
<dbReference type="CDD" id="cd19501">
    <property type="entry name" value="RecA-like_FtsH"/>
    <property type="match status" value="1"/>
</dbReference>
<dbReference type="FunFam" id="1.10.8.60:FF:000001">
    <property type="entry name" value="ATP-dependent zinc metalloprotease FtsH"/>
    <property type="match status" value="1"/>
</dbReference>
<dbReference type="FunFam" id="1.20.58.760:FF:000001">
    <property type="entry name" value="ATP-dependent zinc metalloprotease FtsH"/>
    <property type="match status" value="1"/>
</dbReference>
<dbReference type="FunFam" id="3.40.50.300:FF:000001">
    <property type="entry name" value="ATP-dependent zinc metalloprotease FtsH"/>
    <property type="match status" value="1"/>
</dbReference>
<dbReference type="Gene3D" id="1.10.8.60">
    <property type="match status" value="1"/>
</dbReference>
<dbReference type="Gene3D" id="3.30.720.210">
    <property type="match status" value="1"/>
</dbReference>
<dbReference type="Gene3D" id="3.40.50.300">
    <property type="entry name" value="P-loop containing nucleotide triphosphate hydrolases"/>
    <property type="match status" value="1"/>
</dbReference>
<dbReference type="Gene3D" id="1.20.58.760">
    <property type="entry name" value="Peptidase M41"/>
    <property type="match status" value="1"/>
</dbReference>
<dbReference type="HAMAP" id="MF_01458">
    <property type="entry name" value="FtsH"/>
    <property type="match status" value="1"/>
</dbReference>
<dbReference type="InterPro" id="IPR003593">
    <property type="entry name" value="AAA+_ATPase"/>
</dbReference>
<dbReference type="InterPro" id="IPR041569">
    <property type="entry name" value="AAA_lid_3"/>
</dbReference>
<dbReference type="InterPro" id="IPR003959">
    <property type="entry name" value="ATPase_AAA_core"/>
</dbReference>
<dbReference type="InterPro" id="IPR003960">
    <property type="entry name" value="ATPase_AAA_CS"/>
</dbReference>
<dbReference type="InterPro" id="IPR005936">
    <property type="entry name" value="FtsH"/>
</dbReference>
<dbReference type="InterPro" id="IPR027417">
    <property type="entry name" value="P-loop_NTPase"/>
</dbReference>
<dbReference type="InterPro" id="IPR011546">
    <property type="entry name" value="Pept_M41_FtsH_extracell"/>
</dbReference>
<dbReference type="InterPro" id="IPR000642">
    <property type="entry name" value="Peptidase_M41"/>
</dbReference>
<dbReference type="InterPro" id="IPR037219">
    <property type="entry name" value="Peptidase_M41-like"/>
</dbReference>
<dbReference type="NCBIfam" id="TIGR01241">
    <property type="entry name" value="FtsH_fam"/>
    <property type="match status" value="1"/>
</dbReference>
<dbReference type="PANTHER" id="PTHR23076:SF97">
    <property type="entry name" value="ATP-DEPENDENT ZINC METALLOPROTEASE YME1L1"/>
    <property type="match status" value="1"/>
</dbReference>
<dbReference type="PANTHER" id="PTHR23076">
    <property type="entry name" value="METALLOPROTEASE M41 FTSH"/>
    <property type="match status" value="1"/>
</dbReference>
<dbReference type="Pfam" id="PF00004">
    <property type="entry name" value="AAA"/>
    <property type="match status" value="1"/>
</dbReference>
<dbReference type="Pfam" id="PF17862">
    <property type="entry name" value="AAA_lid_3"/>
    <property type="match status" value="1"/>
</dbReference>
<dbReference type="Pfam" id="PF06480">
    <property type="entry name" value="FtsH_ext"/>
    <property type="match status" value="1"/>
</dbReference>
<dbReference type="Pfam" id="PF01434">
    <property type="entry name" value="Peptidase_M41"/>
    <property type="match status" value="1"/>
</dbReference>
<dbReference type="SMART" id="SM00382">
    <property type="entry name" value="AAA"/>
    <property type="match status" value="1"/>
</dbReference>
<dbReference type="SUPFAM" id="SSF140990">
    <property type="entry name" value="FtsH protease domain-like"/>
    <property type="match status" value="1"/>
</dbReference>
<dbReference type="SUPFAM" id="SSF52540">
    <property type="entry name" value="P-loop containing nucleoside triphosphate hydrolases"/>
    <property type="match status" value="1"/>
</dbReference>
<dbReference type="PROSITE" id="PS00674">
    <property type="entry name" value="AAA"/>
    <property type="match status" value="1"/>
</dbReference>
<name>FTSH_NITOC</name>
<feature type="chain" id="PRO_0000400365" description="ATP-dependent zinc metalloprotease FtsH">
    <location>
        <begin position="1"/>
        <end position="639"/>
    </location>
</feature>
<feature type="topological domain" description="Cytoplasmic" evidence="1">
    <location>
        <begin position="1"/>
        <end position="15"/>
    </location>
</feature>
<feature type="transmembrane region" description="Helical" evidence="1">
    <location>
        <begin position="16"/>
        <end position="36"/>
    </location>
</feature>
<feature type="topological domain" description="Periplasmic" evidence="1">
    <location>
        <begin position="37"/>
        <end position="123"/>
    </location>
</feature>
<feature type="transmembrane region" description="Helical" evidence="1">
    <location>
        <begin position="124"/>
        <end position="144"/>
    </location>
</feature>
<feature type="topological domain" description="Cytoplasmic" evidence="1">
    <location>
        <begin position="145"/>
        <end position="639"/>
    </location>
</feature>
<feature type="active site" evidence="1">
    <location>
        <position position="443"/>
    </location>
</feature>
<feature type="binding site" evidence="1">
    <location>
        <begin position="221"/>
        <end position="228"/>
    </location>
    <ligand>
        <name>ATP</name>
        <dbReference type="ChEBI" id="CHEBI:30616"/>
    </ligand>
</feature>
<feature type="binding site" evidence="1">
    <location>
        <position position="442"/>
    </location>
    <ligand>
        <name>Zn(2+)</name>
        <dbReference type="ChEBI" id="CHEBI:29105"/>
        <note>catalytic</note>
    </ligand>
</feature>
<feature type="binding site" evidence="1">
    <location>
        <position position="446"/>
    </location>
    <ligand>
        <name>Zn(2+)</name>
        <dbReference type="ChEBI" id="CHEBI:29105"/>
        <note>catalytic</note>
    </ligand>
</feature>
<feature type="binding site" evidence="1">
    <location>
        <position position="518"/>
    </location>
    <ligand>
        <name>Zn(2+)</name>
        <dbReference type="ChEBI" id="CHEBI:29105"/>
        <note>catalytic</note>
    </ligand>
</feature>